<comment type="function">
    <text evidence="1">One of the primary rRNA binding proteins, it binds directly to 16S rRNA where it nucleates assembly of the head domain of the 30S subunit.</text>
</comment>
<comment type="subunit">
    <text>Part of the 30S ribosomal subunit.</text>
</comment>
<comment type="subcellular location">
    <subcellularLocation>
        <location>Plastid</location>
        <location>Chloroplast</location>
    </subcellularLocation>
</comment>
<comment type="similarity">
    <text evidence="3">Belongs to the universal ribosomal protein uS7 family.</text>
</comment>
<protein>
    <recommendedName>
        <fullName evidence="2">Small ribosomal subunit protein uS7cz/uS7cy</fullName>
    </recommendedName>
    <alternativeName>
        <fullName>30S ribosomal protein S7, chloroplastic</fullName>
    </alternativeName>
</protein>
<gene>
    <name type="primary">rps7-A</name>
</gene>
<gene>
    <name type="primary">rps7-B</name>
</gene>
<accession>Q2MIE1</accession>
<proteinExistence type="inferred from homology"/>
<geneLocation type="chloroplast"/>
<keyword id="KW-0150">Chloroplast</keyword>
<keyword id="KW-0934">Plastid</keyword>
<keyword id="KW-0687">Ribonucleoprotein</keyword>
<keyword id="KW-0689">Ribosomal protein</keyword>
<keyword id="KW-0694">RNA-binding</keyword>
<keyword id="KW-0699">rRNA-binding</keyword>
<feature type="chain" id="PRO_0000277056" description="Small ribosomal subunit protein uS7cz/uS7cy">
    <location>
        <begin position="1"/>
        <end position="155"/>
    </location>
</feature>
<evidence type="ECO:0000250" key="1"/>
<evidence type="ECO:0000255" key="2">
    <source>
        <dbReference type="HAMAP-Rule" id="MF_00480"/>
    </source>
</evidence>
<evidence type="ECO:0000305" key="3"/>
<name>RR7_SOLBU</name>
<organism>
    <name type="scientific">Solanum bulbocastanum</name>
    <name type="common">Wild potato</name>
    <dbReference type="NCBI Taxonomy" id="147425"/>
    <lineage>
        <taxon>Eukaryota</taxon>
        <taxon>Viridiplantae</taxon>
        <taxon>Streptophyta</taxon>
        <taxon>Embryophyta</taxon>
        <taxon>Tracheophyta</taxon>
        <taxon>Spermatophyta</taxon>
        <taxon>Magnoliopsida</taxon>
        <taxon>eudicotyledons</taxon>
        <taxon>Gunneridae</taxon>
        <taxon>Pentapetalae</taxon>
        <taxon>asterids</taxon>
        <taxon>lamiids</taxon>
        <taxon>Solanales</taxon>
        <taxon>Solanaceae</taxon>
        <taxon>Solanoideae</taxon>
        <taxon>Solaneae</taxon>
        <taxon>Solanum</taxon>
    </lineage>
</organism>
<dbReference type="EMBL" id="DQ347958">
    <property type="protein sequence ID" value="ABC56259.1"/>
    <property type="molecule type" value="Genomic_DNA"/>
</dbReference>
<dbReference type="EMBL" id="DQ347958">
    <property type="protein sequence ID" value="ABC56274.1"/>
    <property type="molecule type" value="Genomic_DNA"/>
</dbReference>
<dbReference type="SMR" id="Q2MIE1"/>
<dbReference type="GO" id="GO:0009507">
    <property type="term" value="C:chloroplast"/>
    <property type="evidence" value="ECO:0007669"/>
    <property type="project" value="UniProtKB-SubCell"/>
</dbReference>
<dbReference type="GO" id="GO:0015935">
    <property type="term" value="C:small ribosomal subunit"/>
    <property type="evidence" value="ECO:0007669"/>
    <property type="project" value="InterPro"/>
</dbReference>
<dbReference type="GO" id="GO:0019843">
    <property type="term" value="F:rRNA binding"/>
    <property type="evidence" value="ECO:0007669"/>
    <property type="project" value="UniProtKB-UniRule"/>
</dbReference>
<dbReference type="GO" id="GO:0003735">
    <property type="term" value="F:structural constituent of ribosome"/>
    <property type="evidence" value="ECO:0007669"/>
    <property type="project" value="InterPro"/>
</dbReference>
<dbReference type="GO" id="GO:0006412">
    <property type="term" value="P:translation"/>
    <property type="evidence" value="ECO:0007669"/>
    <property type="project" value="UniProtKB-UniRule"/>
</dbReference>
<dbReference type="CDD" id="cd14871">
    <property type="entry name" value="uS7_Chloroplast"/>
    <property type="match status" value="1"/>
</dbReference>
<dbReference type="FunFam" id="1.10.455.10:FF:000001">
    <property type="entry name" value="30S ribosomal protein S7"/>
    <property type="match status" value="1"/>
</dbReference>
<dbReference type="Gene3D" id="1.10.455.10">
    <property type="entry name" value="Ribosomal protein S7 domain"/>
    <property type="match status" value="1"/>
</dbReference>
<dbReference type="HAMAP" id="MF_00480_B">
    <property type="entry name" value="Ribosomal_uS7_B"/>
    <property type="match status" value="1"/>
</dbReference>
<dbReference type="InterPro" id="IPR000235">
    <property type="entry name" value="Ribosomal_uS7"/>
</dbReference>
<dbReference type="InterPro" id="IPR005717">
    <property type="entry name" value="Ribosomal_uS7_bac/org-type"/>
</dbReference>
<dbReference type="InterPro" id="IPR020606">
    <property type="entry name" value="Ribosomal_uS7_CS"/>
</dbReference>
<dbReference type="InterPro" id="IPR023798">
    <property type="entry name" value="Ribosomal_uS7_dom"/>
</dbReference>
<dbReference type="InterPro" id="IPR036823">
    <property type="entry name" value="Ribosomal_uS7_dom_sf"/>
</dbReference>
<dbReference type="NCBIfam" id="TIGR01029">
    <property type="entry name" value="rpsG_bact"/>
    <property type="match status" value="1"/>
</dbReference>
<dbReference type="PANTHER" id="PTHR11205">
    <property type="entry name" value="RIBOSOMAL PROTEIN S7"/>
    <property type="match status" value="1"/>
</dbReference>
<dbReference type="Pfam" id="PF00177">
    <property type="entry name" value="Ribosomal_S7"/>
    <property type="match status" value="1"/>
</dbReference>
<dbReference type="PIRSF" id="PIRSF002122">
    <property type="entry name" value="RPS7p_RPS7a_RPS5e_RPS7o"/>
    <property type="match status" value="1"/>
</dbReference>
<dbReference type="SUPFAM" id="SSF47973">
    <property type="entry name" value="Ribosomal protein S7"/>
    <property type="match status" value="1"/>
</dbReference>
<dbReference type="PROSITE" id="PS00052">
    <property type="entry name" value="RIBOSOMAL_S7"/>
    <property type="match status" value="1"/>
</dbReference>
<reference key="1">
    <citation type="journal article" date="2006" name="Theor. Appl. Genet.">
        <title>Complete chloroplast genome sequences of Solanum bulbocastanum, Solanum lycopersicum and comparative analyses with other Solanaceae genomes.</title>
        <authorList>
            <person name="Daniell H."/>
            <person name="Lee S.-B."/>
            <person name="Grevich J."/>
            <person name="Saski C."/>
            <person name="Quesada-Vargas T."/>
            <person name="Guda C."/>
            <person name="Tomkins J."/>
            <person name="Jansen R.K."/>
        </authorList>
    </citation>
    <scope>NUCLEOTIDE SEQUENCE [LARGE SCALE GENOMIC DNA]</scope>
    <source>
        <strain>cv. PT29</strain>
    </source>
</reference>
<sequence length="155" mass="17386">MSRRGTAEKKTAKSDPIYRNRLVNMLVNRILKHGKKSLAYQIIYRAVKKIQQKTETNPLSVLRQAIRGVTPDITVKARRVGGSTHQVPIEIGSTQGKALAIRWLLAASRKRPGRNMAFKLSSELVDAAKGSGDAIRKKEETHRMAEANRAFAHFR</sequence>